<reference key="1">
    <citation type="journal article" date="2003" name="Genome Res.">
        <title>Genome sequence of an M3 strain of Streptococcus pyogenes reveals a large-scale genomic rearrangement in invasive strains and new insights into phage evolution.</title>
        <authorList>
            <person name="Nakagawa I."/>
            <person name="Kurokawa K."/>
            <person name="Yamashita A."/>
            <person name="Nakata M."/>
            <person name="Tomiyasu Y."/>
            <person name="Okahashi N."/>
            <person name="Kawabata S."/>
            <person name="Yamazaki K."/>
            <person name="Shiba T."/>
            <person name="Yasunaga T."/>
            <person name="Hayashi H."/>
            <person name="Hattori M."/>
            <person name="Hamada S."/>
        </authorList>
    </citation>
    <scope>NUCLEOTIDE SEQUENCE [LARGE SCALE GENOMIC DNA]</scope>
    <source>
        <strain>SSI-1</strain>
    </source>
</reference>
<gene>
    <name evidence="1" type="primary">hslO</name>
    <name type="ordered locus">SPs0098</name>
</gene>
<proteinExistence type="inferred from homology"/>
<protein>
    <recommendedName>
        <fullName evidence="1">33 kDa chaperonin</fullName>
    </recommendedName>
    <alternativeName>
        <fullName evidence="1">Heat shock protein 33 homolog</fullName>
        <shortName evidence="1">HSP33</shortName>
    </alternativeName>
</protein>
<dbReference type="EMBL" id="BA000034">
    <property type="protein sequence ID" value="BAC63193.1"/>
    <property type="molecule type" value="Genomic_DNA"/>
</dbReference>
<dbReference type="RefSeq" id="WP_011054120.1">
    <property type="nucleotide sequence ID" value="NC_004606.1"/>
</dbReference>
<dbReference type="SMR" id="P0DB69"/>
<dbReference type="KEGG" id="sps:SPs0098"/>
<dbReference type="HOGENOM" id="CLU_054493_1_0_9"/>
<dbReference type="GO" id="GO:0005737">
    <property type="term" value="C:cytoplasm"/>
    <property type="evidence" value="ECO:0007669"/>
    <property type="project" value="UniProtKB-SubCell"/>
</dbReference>
<dbReference type="GO" id="GO:0044183">
    <property type="term" value="F:protein folding chaperone"/>
    <property type="evidence" value="ECO:0007669"/>
    <property type="project" value="TreeGrafter"/>
</dbReference>
<dbReference type="GO" id="GO:0051082">
    <property type="term" value="F:unfolded protein binding"/>
    <property type="evidence" value="ECO:0007669"/>
    <property type="project" value="UniProtKB-UniRule"/>
</dbReference>
<dbReference type="GO" id="GO:0042026">
    <property type="term" value="P:protein refolding"/>
    <property type="evidence" value="ECO:0007669"/>
    <property type="project" value="TreeGrafter"/>
</dbReference>
<dbReference type="CDD" id="cd00498">
    <property type="entry name" value="Hsp33"/>
    <property type="match status" value="1"/>
</dbReference>
<dbReference type="Gene3D" id="3.55.30.10">
    <property type="entry name" value="Hsp33 domain"/>
    <property type="match status" value="1"/>
</dbReference>
<dbReference type="Gene3D" id="3.90.1280.10">
    <property type="entry name" value="HSP33 redox switch-like"/>
    <property type="match status" value="1"/>
</dbReference>
<dbReference type="HAMAP" id="MF_00117">
    <property type="entry name" value="HslO"/>
    <property type="match status" value="1"/>
</dbReference>
<dbReference type="InterPro" id="IPR000397">
    <property type="entry name" value="Heat_shock_Hsp33"/>
</dbReference>
<dbReference type="InterPro" id="IPR016154">
    <property type="entry name" value="Heat_shock_Hsp33_C"/>
</dbReference>
<dbReference type="InterPro" id="IPR016153">
    <property type="entry name" value="Heat_shock_Hsp33_N"/>
</dbReference>
<dbReference type="NCBIfam" id="NF001033">
    <property type="entry name" value="PRK00114.1"/>
    <property type="match status" value="1"/>
</dbReference>
<dbReference type="PANTHER" id="PTHR30111">
    <property type="entry name" value="33 KDA CHAPERONIN"/>
    <property type="match status" value="1"/>
</dbReference>
<dbReference type="PANTHER" id="PTHR30111:SF1">
    <property type="entry name" value="33 KDA CHAPERONIN"/>
    <property type="match status" value="1"/>
</dbReference>
<dbReference type="Pfam" id="PF01430">
    <property type="entry name" value="HSP33"/>
    <property type="match status" value="1"/>
</dbReference>
<dbReference type="PIRSF" id="PIRSF005261">
    <property type="entry name" value="Heat_shock_Hsp33"/>
    <property type="match status" value="1"/>
</dbReference>
<dbReference type="SUPFAM" id="SSF64397">
    <property type="entry name" value="Hsp33 domain"/>
    <property type="match status" value="1"/>
</dbReference>
<dbReference type="SUPFAM" id="SSF118352">
    <property type="entry name" value="HSP33 redox switch-like"/>
    <property type="match status" value="1"/>
</dbReference>
<accession>P0DB69</accession>
<accession>Q8K8U9</accession>
<feature type="chain" id="PRO_0000411372" description="33 kDa chaperonin">
    <location>
        <begin position="1"/>
        <end position="290"/>
    </location>
</feature>
<feature type="disulfide bond" description="Redox-active" evidence="1">
    <location>
        <begin position="235"/>
        <end position="237"/>
    </location>
</feature>
<feature type="disulfide bond" description="Redox-active" evidence="1">
    <location>
        <begin position="268"/>
        <end position="271"/>
    </location>
</feature>
<name>HSLO_STRPQ</name>
<comment type="function">
    <text evidence="1">Redox regulated molecular chaperone. Protects both thermally unfolding and oxidatively damaged proteins from irreversible aggregation. Plays an important role in the bacterial defense system toward oxidative stress.</text>
</comment>
<comment type="subcellular location">
    <subcellularLocation>
        <location evidence="1">Cytoplasm</location>
    </subcellularLocation>
</comment>
<comment type="PTM">
    <text evidence="1">Under oxidizing conditions two disulfide bonds are formed involving the reactive cysteines. Under reducing conditions zinc is bound to the reactive cysteines and the protein is inactive.</text>
</comment>
<comment type="similarity">
    <text evidence="1">Belongs to the HSP33 family.</text>
</comment>
<sequence>MDKIIKSIAQSGAFRAYVLDSTETVALAQEKHNTLSSSTVALGRTLIANQILAANQKGDSKITVKVIGDSSFGHIISVADTKGHVKGYIQNTGVDIKKTATGEVLVGPFMGNGHFVTIIDYGTGNPYTSTTPLITGEIGEDFAYYLTESEQTPSAIGLNVLLDENDKVKVAGGFMVQVLPGASEEEIARYEKRLQEMPAISHLLASKNHVEALLEAIYGDEPYKRLSEEPLSFQCDCSRERFEAALMTLPKADLQAMIDEDKGAEIVCQFCGTKYQFNESDLEALINDKA</sequence>
<keyword id="KW-0143">Chaperone</keyword>
<keyword id="KW-0963">Cytoplasm</keyword>
<keyword id="KW-1015">Disulfide bond</keyword>
<keyword id="KW-0676">Redox-active center</keyword>
<keyword id="KW-0862">Zinc</keyword>
<organism>
    <name type="scientific">Streptococcus pyogenes serotype M3 (strain SSI-1)</name>
    <dbReference type="NCBI Taxonomy" id="193567"/>
    <lineage>
        <taxon>Bacteria</taxon>
        <taxon>Bacillati</taxon>
        <taxon>Bacillota</taxon>
        <taxon>Bacilli</taxon>
        <taxon>Lactobacillales</taxon>
        <taxon>Streptococcaceae</taxon>
        <taxon>Streptococcus</taxon>
    </lineage>
</organism>
<evidence type="ECO:0000255" key="1">
    <source>
        <dbReference type="HAMAP-Rule" id="MF_00117"/>
    </source>
</evidence>